<feature type="chain" id="PRO_1000121854" description="Glutamate-1-semialdehyde 2,1-aminomutase">
    <location>
        <begin position="1"/>
        <end position="426"/>
    </location>
</feature>
<feature type="modified residue" description="N6-(pyridoxal phosphate)lysine" evidence="1">
    <location>
        <position position="265"/>
    </location>
</feature>
<dbReference type="EC" id="5.4.3.8" evidence="1"/>
<dbReference type="EMBL" id="CP000687">
    <property type="protein sequence ID" value="ABY70135.1"/>
    <property type="molecule type" value="Genomic_DNA"/>
</dbReference>
<dbReference type="RefSeq" id="WP_005598878.1">
    <property type="nucleotide sequence ID" value="NC_010278.1"/>
</dbReference>
<dbReference type="SMR" id="B0BRF0"/>
<dbReference type="GeneID" id="48599838"/>
<dbReference type="KEGG" id="apj:APJL_1583"/>
<dbReference type="HOGENOM" id="CLU_016922_1_5_6"/>
<dbReference type="UniPathway" id="UPA00251">
    <property type="reaction ID" value="UER00317"/>
</dbReference>
<dbReference type="Proteomes" id="UP000008547">
    <property type="component" value="Chromosome"/>
</dbReference>
<dbReference type="GO" id="GO:0005737">
    <property type="term" value="C:cytoplasm"/>
    <property type="evidence" value="ECO:0007669"/>
    <property type="project" value="UniProtKB-SubCell"/>
</dbReference>
<dbReference type="GO" id="GO:0042286">
    <property type="term" value="F:glutamate-1-semialdehyde 2,1-aminomutase activity"/>
    <property type="evidence" value="ECO:0007669"/>
    <property type="project" value="UniProtKB-UniRule"/>
</dbReference>
<dbReference type="GO" id="GO:0030170">
    <property type="term" value="F:pyridoxal phosphate binding"/>
    <property type="evidence" value="ECO:0007669"/>
    <property type="project" value="InterPro"/>
</dbReference>
<dbReference type="GO" id="GO:0008483">
    <property type="term" value="F:transaminase activity"/>
    <property type="evidence" value="ECO:0007669"/>
    <property type="project" value="InterPro"/>
</dbReference>
<dbReference type="GO" id="GO:0006782">
    <property type="term" value="P:protoporphyrinogen IX biosynthetic process"/>
    <property type="evidence" value="ECO:0007669"/>
    <property type="project" value="UniProtKB-UniRule"/>
</dbReference>
<dbReference type="CDD" id="cd00610">
    <property type="entry name" value="OAT_like"/>
    <property type="match status" value="1"/>
</dbReference>
<dbReference type="FunFam" id="3.40.640.10:FF:000021">
    <property type="entry name" value="Glutamate-1-semialdehyde 2,1-aminomutase"/>
    <property type="match status" value="1"/>
</dbReference>
<dbReference type="Gene3D" id="3.90.1150.10">
    <property type="entry name" value="Aspartate Aminotransferase, domain 1"/>
    <property type="match status" value="1"/>
</dbReference>
<dbReference type="Gene3D" id="3.40.640.10">
    <property type="entry name" value="Type I PLP-dependent aspartate aminotransferase-like (Major domain)"/>
    <property type="match status" value="1"/>
</dbReference>
<dbReference type="HAMAP" id="MF_00375">
    <property type="entry name" value="HemL_aminotrans_3"/>
    <property type="match status" value="1"/>
</dbReference>
<dbReference type="InterPro" id="IPR004639">
    <property type="entry name" value="4pyrrol_synth_GluAld_NH2Trfase"/>
</dbReference>
<dbReference type="InterPro" id="IPR005814">
    <property type="entry name" value="Aminotrans_3"/>
</dbReference>
<dbReference type="InterPro" id="IPR049704">
    <property type="entry name" value="Aminotrans_3_PPA_site"/>
</dbReference>
<dbReference type="InterPro" id="IPR015424">
    <property type="entry name" value="PyrdxlP-dep_Trfase"/>
</dbReference>
<dbReference type="InterPro" id="IPR015421">
    <property type="entry name" value="PyrdxlP-dep_Trfase_major"/>
</dbReference>
<dbReference type="InterPro" id="IPR015422">
    <property type="entry name" value="PyrdxlP-dep_Trfase_small"/>
</dbReference>
<dbReference type="NCBIfam" id="TIGR00713">
    <property type="entry name" value="hemL"/>
    <property type="match status" value="1"/>
</dbReference>
<dbReference type="NCBIfam" id="NF000818">
    <property type="entry name" value="PRK00062.1"/>
    <property type="match status" value="1"/>
</dbReference>
<dbReference type="PANTHER" id="PTHR43713">
    <property type="entry name" value="GLUTAMATE-1-SEMIALDEHYDE 2,1-AMINOMUTASE"/>
    <property type="match status" value="1"/>
</dbReference>
<dbReference type="PANTHER" id="PTHR43713:SF3">
    <property type="entry name" value="GLUTAMATE-1-SEMIALDEHYDE 2,1-AMINOMUTASE 1, CHLOROPLASTIC-RELATED"/>
    <property type="match status" value="1"/>
</dbReference>
<dbReference type="Pfam" id="PF00202">
    <property type="entry name" value="Aminotran_3"/>
    <property type="match status" value="1"/>
</dbReference>
<dbReference type="SUPFAM" id="SSF53383">
    <property type="entry name" value="PLP-dependent transferases"/>
    <property type="match status" value="1"/>
</dbReference>
<dbReference type="PROSITE" id="PS00600">
    <property type="entry name" value="AA_TRANSFER_CLASS_3"/>
    <property type="match status" value="1"/>
</dbReference>
<proteinExistence type="inferred from homology"/>
<reference key="1">
    <citation type="journal article" date="2008" name="PLoS ONE">
        <title>Genome biology of Actinobacillus pleuropneumoniae JL03, an isolate of serotype 3 prevalent in China.</title>
        <authorList>
            <person name="Xu Z."/>
            <person name="Zhou Y."/>
            <person name="Li L."/>
            <person name="Zhou R."/>
            <person name="Xiao S."/>
            <person name="Wan Y."/>
            <person name="Zhang S."/>
            <person name="Wang K."/>
            <person name="Li W."/>
            <person name="Li L."/>
            <person name="Jin H."/>
            <person name="Kang M."/>
            <person name="Dalai B."/>
            <person name="Li T."/>
            <person name="Liu L."/>
            <person name="Cheng Y."/>
            <person name="Zhang L."/>
            <person name="Xu T."/>
            <person name="Zheng H."/>
            <person name="Pu S."/>
            <person name="Wang B."/>
            <person name="Gu W."/>
            <person name="Zhang X.L."/>
            <person name="Zhu G.-F."/>
            <person name="Wang S."/>
            <person name="Zhao G.-P."/>
            <person name="Chen H."/>
        </authorList>
    </citation>
    <scope>NUCLEOTIDE SEQUENCE [LARGE SCALE GENOMIC DNA]</scope>
    <source>
        <strain>JL03</strain>
    </source>
</reference>
<evidence type="ECO:0000255" key="1">
    <source>
        <dbReference type="HAMAP-Rule" id="MF_00375"/>
    </source>
</evidence>
<comment type="catalytic activity">
    <reaction evidence="1">
        <text>(S)-4-amino-5-oxopentanoate = 5-aminolevulinate</text>
        <dbReference type="Rhea" id="RHEA:14265"/>
        <dbReference type="ChEBI" id="CHEBI:57501"/>
        <dbReference type="ChEBI" id="CHEBI:356416"/>
        <dbReference type="EC" id="5.4.3.8"/>
    </reaction>
</comment>
<comment type="cofactor">
    <cofactor evidence="1">
        <name>pyridoxal 5'-phosphate</name>
        <dbReference type="ChEBI" id="CHEBI:597326"/>
    </cofactor>
</comment>
<comment type="pathway">
    <text evidence="1">Porphyrin-containing compound metabolism; protoporphyrin-IX biosynthesis; 5-aminolevulinate from L-glutamyl-tRNA(Glu): step 2/2.</text>
</comment>
<comment type="subunit">
    <text evidence="1">Homodimer.</text>
</comment>
<comment type="subcellular location">
    <subcellularLocation>
        <location evidence="1">Cytoplasm</location>
    </subcellularLocation>
</comment>
<comment type="similarity">
    <text evidence="1">Belongs to the class-III pyridoxal-phosphate-dependent aminotransferase family. HemL subfamily.</text>
</comment>
<accession>B0BRF0</accession>
<gene>
    <name evidence="1" type="primary">hemL</name>
    <name type="ordered locus">APJL_1583</name>
</gene>
<protein>
    <recommendedName>
        <fullName evidence="1">Glutamate-1-semialdehyde 2,1-aminomutase</fullName>
        <shortName evidence="1">GSA</shortName>
        <ecNumber evidence="1">5.4.3.8</ecNumber>
    </recommendedName>
    <alternativeName>
        <fullName evidence="1">Glutamate-1-semialdehyde aminotransferase</fullName>
        <shortName evidence="1">GSA-AT</shortName>
    </alternativeName>
</protein>
<sequence>MSKSEQLFEKAQKVIPGGVNSPVRAFKGVGGTPVFIQKAEGAYITDSDGKKYIDYVGSWGPMVLGHNHPAIIDAVLKAVPNGLSFGAPTESEITLAELVTKLVPSIELVRMVSSGTEATMSAIRLARGYTGRDKIIKFEGCYHGHSDSLLVKAGSGALTLGQPSGPGVPADFAKHTLTCTYNDLDSVKTAFEQYPNEIACLIVEPVAGNMNCIPPKNDFLKGLRALCDQYGAVFIIDEVMTGFRVALGGAQAYYDVKPDLTTLGKIIGGGMPVGAFGGKKEIMEYIAPTGPVYQAGTLSGNPIAMAAGLACLTELSKAGNEEKLAAQTKTLAEGFKALADKHNVPFTAQYVGGMFGLFFTEQAEITNFQEVMKCDAAKFNRFFHLMLEQGVYLAPSAFEAGFMSLAHSDEDIQATLAAADKAFAQL</sequence>
<keyword id="KW-0963">Cytoplasm</keyword>
<keyword id="KW-0413">Isomerase</keyword>
<keyword id="KW-0627">Porphyrin biosynthesis</keyword>
<keyword id="KW-0663">Pyridoxal phosphate</keyword>
<name>GSA_ACTPJ</name>
<organism>
    <name type="scientific">Actinobacillus pleuropneumoniae serotype 3 (strain JL03)</name>
    <dbReference type="NCBI Taxonomy" id="434271"/>
    <lineage>
        <taxon>Bacteria</taxon>
        <taxon>Pseudomonadati</taxon>
        <taxon>Pseudomonadota</taxon>
        <taxon>Gammaproteobacteria</taxon>
        <taxon>Pasteurellales</taxon>
        <taxon>Pasteurellaceae</taxon>
        <taxon>Actinobacillus</taxon>
    </lineage>
</organism>